<sequence>MMAQSKANGSHYALTAIGLGMLVLGVIMAMWNLVPGFSPADKPTSQGNKTEGGGGILKSKTFSVAYVLVGAGMMLLLLAICLSIRDKRRMRQSEELARIQQQAGTVPHSQEEDSQEEEEDVSSRYYVPSYEEVMNTGYPETRGQEQNPRLSISLPSYESLTGLDEATPTSTRAETETSPGHAPDRQNSKLAKRLKPLKVRRIKSEKLHLKDFRITLPDKNVPPPSIEPLTPPPLYDEVQAKAPDARPPD</sequence>
<feature type="chain" id="PRO_0000072578" description="Transmembrane protein 51">
    <location>
        <begin position="1"/>
        <end position="249"/>
    </location>
</feature>
<feature type="transmembrane region" description="Helical" evidence="2">
    <location>
        <begin position="17"/>
        <end position="37"/>
    </location>
</feature>
<feature type="transmembrane region" description="Helical" evidence="2">
    <location>
        <begin position="64"/>
        <end position="84"/>
    </location>
</feature>
<feature type="region of interest" description="Disordered" evidence="3">
    <location>
        <begin position="95"/>
        <end position="126"/>
    </location>
</feature>
<feature type="region of interest" description="Disordered" evidence="3">
    <location>
        <begin position="161"/>
        <end position="199"/>
    </location>
</feature>
<feature type="region of interest" description="Disordered" evidence="3">
    <location>
        <begin position="213"/>
        <end position="249"/>
    </location>
</feature>
<feature type="compositionally biased region" description="Polar residues" evidence="3">
    <location>
        <begin position="99"/>
        <end position="108"/>
    </location>
</feature>
<feature type="compositionally biased region" description="Polar residues" evidence="3">
    <location>
        <begin position="167"/>
        <end position="178"/>
    </location>
</feature>
<feature type="compositionally biased region" description="Basic residues" evidence="3">
    <location>
        <begin position="190"/>
        <end position="199"/>
    </location>
</feature>
<feature type="compositionally biased region" description="Pro residues" evidence="3">
    <location>
        <begin position="220"/>
        <end position="234"/>
    </location>
</feature>
<feature type="modified residue" description="Phosphoserine" evidence="5 7">
    <location>
        <position position="109"/>
    </location>
</feature>
<feature type="modified residue" description="Phosphoserine" evidence="5 6 7">
    <location>
        <position position="114"/>
    </location>
</feature>
<feature type="modified residue" description="Phosphoserine" evidence="1">
    <location>
        <position position="178"/>
    </location>
</feature>
<feature type="modified residue" description="Phosphoserine" evidence="1">
    <location>
        <position position="188"/>
    </location>
</feature>
<proteinExistence type="evidence at protein level"/>
<keyword id="KW-0472">Membrane</keyword>
<keyword id="KW-0597">Phosphoprotein</keyword>
<keyword id="KW-1185">Reference proteome</keyword>
<keyword id="KW-0812">Transmembrane</keyword>
<keyword id="KW-1133">Transmembrane helix</keyword>
<comment type="subcellular location">
    <subcellularLocation>
        <location evidence="4">Membrane</location>
        <topology evidence="4">Multi-pass membrane protein</topology>
    </subcellularLocation>
</comment>
<gene>
    <name type="primary">Tmem51</name>
</gene>
<evidence type="ECO:0000250" key="1">
    <source>
        <dbReference type="UniProtKB" id="Q9NW97"/>
    </source>
</evidence>
<evidence type="ECO:0000255" key="2"/>
<evidence type="ECO:0000256" key="3">
    <source>
        <dbReference type="SAM" id="MobiDB-lite"/>
    </source>
</evidence>
<evidence type="ECO:0000305" key="4"/>
<evidence type="ECO:0007744" key="5">
    <source>
    </source>
</evidence>
<evidence type="ECO:0007744" key="6">
    <source>
    </source>
</evidence>
<evidence type="ECO:0007744" key="7">
    <source>
    </source>
</evidence>
<protein>
    <recommendedName>
        <fullName>Transmembrane protein 51</fullName>
    </recommendedName>
</protein>
<dbReference type="EMBL" id="AK077758">
    <property type="protein sequence ID" value="BAC36994.1"/>
    <property type="molecule type" value="mRNA"/>
</dbReference>
<dbReference type="EMBL" id="AK164026">
    <property type="protein sequence ID" value="BAE37592.1"/>
    <property type="molecule type" value="mRNA"/>
</dbReference>
<dbReference type="EMBL" id="BC003277">
    <property type="protein sequence ID" value="AAH03277.1"/>
    <property type="molecule type" value="mRNA"/>
</dbReference>
<dbReference type="CCDS" id="CCDS18886.1"/>
<dbReference type="RefSeq" id="NP_001406297.1">
    <property type="nucleotide sequence ID" value="NM_001419368.1"/>
</dbReference>
<dbReference type="RefSeq" id="NP_001406299.1">
    <property type="nucleotide sequence ID" value="NM_001419370.1"/>
</dbReference>
<dbReference type="RefSeq" id="NP_001406300.1">
    <property type="nucleotide sequence ID" value="NM_001419371.1"/>
</dbReference>
<dbReference type="RefSeq" id="NP_001406301.1">
    <property type="nucleotide sequence ID" value="NM_001419372.1"/>
</dbReference>
<dbReference type="RefSeq" id="NP_001406303.1">
    <property type="nucleotide sequence ID" value="NM_001419374.1"/>
</dbReference>
<dbReference type="RefSeq" id="NP_663377.1">
    <property type="nucleotide sequence ID" value="NM_145402.4"/>
</dbReference>
<dbReference type="RefSeq" id="XP_006538776.1">
    <property type="nucleotide sequence ID" value="XM_006538713.3"/>
</dbReference>
<dbReference type="RefSeq" id="XP_006538777.1">
    <property type="nucleotide sequence ID" value="XM_006538714.2"/>
</dbReference>
<dbReference type="RefSeq" id="XP_006538778.1">
    <property type="nucleotide sequence ID" value="XM_006538715.5"/>
</dbReference>
<dbReference type="RefSeq" id="XP_006538780.1">
    <property type="nucleotide sequence ID" value="XM_006538717.3"/>
</dbReference>
<dbReference type="RefSeq" id="XP_011248529.1">
    <property type="nucleotide sequence ID" value="XM_011250227.2"/>
</dbReference>
<dbReference type="BioGRID" id="229518">
    <property type="interactions" value="1"/>
</dbReference>
<dbReference type="FunCoup" id="Q99LG1">
    <property type="interactions" value="3"/>
</dbReference>
<dbReference type="STRING" id="10090.ENSMUSP00000042919"/>
<dbReference type="iPTMnet" id="Q99LG1"/>
<dbReference type="PhosphoSitePlus" id="Q99LG1"/>
<dbReference type="SwissPalm" id="Q99LG1"/>
<dbReference type="jPOST" id="Q99LG1"/>
<dbReference type="PaxDb" id="10090-ENSMUSP00000042919"/>
<dbReference type="PeptideAtlas" id="Q99LG1"/>
<dbReference type="ProteomicsDB" id="259586"/>
<dbReference type="Antibodypedia" id="3057">
    <property type="antibodies" value="40 antibodies from 16 providers"/>
</dbReference>
<dbReference type="Ensembl" id="ENSMUST00000036572.4">
    <property type="protein sequence ID" value="ENSMUSP00000042919.4"/>
    <property type="gene ID" value="ENSMUSG00000040616.4"/>
</dbReference>
<dbReference type="GeneID" id="214359"/>
<dbReference type="KEGG" id="mmu:214359"/>
<dbReference type="UCSC" id="uc008vpr.1">
    <property type="organism name" value="mouse"/>
</dbReference>
<dbReference type="AGR" id="MGI:2384874"/>
<dbReference type="CTD" id="55092"/>
<dbReference type="MGI" id="MGI:2384874">
    <property type="gene designation" value="Tmem51"/>
</dbReference>
<dbReference type="VEuPathDB" id="HostDB:ENSMUSG00000040616"/>
<dbReference type="eggNOG" id="ENOG502QU2P">
    <property type="taxonomic scope" value="Eukaryota"/>
</dbReference>
<dbReference type="GeneTree" id="ENSGT00390000009278"/>
<dbReference type="HOGENOM" id="CLU_1115460_0_0_1"/>
<dbReference type="InParanoid" id="Q99LG1"/>
<dbReference type="OMA" id="EVMSTNY"/>
<dbReference type="OrthoDB" id="8946153at2759"/>
<dbReference type="PhylomeDB" id="Q99LG1"/>
<dbReference type="TreeFam" id="TF332361"/>
<dbReference type="BioGRID-ORCS" id="214359">
    <property type="hits" value="4 hits in 78 CRISPR screens"/>
</dbReference>
<dbReference type="ChiTaRS" id="Tmem51">
    <property type="organism name" value="mouse"/>
</dbReference>
<dbReference type="PRO" id="PR:Q99LG1"/>
<dbReference type="Proteomes" id="UP000000589">
    <property type="component" value="Chromosome 4"/>
</dbReference>
<dbReference type="RNAct" id="Q99LG1">
    <property type="molecule type" value="protein"/>
</dbReference>
<dbReference type="Bgee" id="ENSMUSG00000040616">
    <property type="expression patterns" value="Expressed in stomach and 62 other cell types or tissues"/>
</dbReference>
<dbReference type="GO" id="GO:0016020">
    <property type="term" value="C:membrane"/>
    <property type="evidence" value="ECO:0007669"/>
    <property type="project" value="UniProtKB-SubCell"/>
</dbReference>
<dbReference type="InterPro" id="IPR029265">
    <property type="entry name" value="TMEM51"/>
</dbReference>
<dbReference type="PANTHER" id="PTHR16015">
    <property type="entry name" value="TRANSMEMBRANE PROTEIN 51"/>
    <property type="match status" value="1"/>
</dbReference>
<dbReference type="PANTHER" id="PTHR16015:SF0">
    <property type="entry name" value="TRANSMEMBRANE PROTEIN 51"/>
    <property type="match status" value="1"/>
</dbReference>
<dbReference type="Pfam" id="PF15345">
    <property type="entry name" value="TMEM51"/>
    <property type="match status" value="1"/>
</dbReference>
<accession>Q99LG1</accession>
<accession>Q3TPZ3</accession>
<reference key="1">
    <citation type="journal article" date="2005" name="Science">
        <title>The transcriptional landscape of the mammalian genome.</title>
        <authorList>
            <person name="Carninci P."/>
            <person name="Kasukawa T."/>
            <person name="Katayama S."/>
            <person name="Gough J."/>
            <person name="Frith M.C."/>
            <person name="Maeda N."/>
            <person name="Oyama R."/>
            <person name="Ravasi T."/>
            <person name="Lenhard B."/>
            <person name="Wells C."/>
            <person name="Kodzius R."/>
            <person name="Shimokawa K."/>
            <person name="Bajic V.B."/>
            <person name="Brenner S.E."/>
            <person name="Batalov S."/>
            <person name="Forrest A.R."/>
            <person name="Zavolan M."/>
            <person name="Davis M.J."/>
            <person name="Wilming L.G."/>
            <person name="Aidinis V."/>
            <person name="Allen J.E."/>
            <person name="Ambesi-Impiombato A."/>
            <person name="Apweiler R."/>
            <person name="Aturaliya R.N."/>
            <person name="Bailey T.L."/>
            <person name="Bansal M."/>
            <person name="Baxter L."/>
            <person name="Beisel K.W."/>
            <person name="Bersano T."/>
            <person name="Bono H."/>
            <person name="Chalk A.M."/>
            <person name="Chiu K.P."/>
            <person name="Choudhary V."/>
            <person name="Christoffels A."/>
            <person name="Clutterbuck D.R."/>
            <person name="Crowe M.L."/>
            <person name="Dalla E."/>
            <person name="Dalrymple B.P."/>
            <person name="de Bono B."/>
            <person name="Della Gatta G."/>
            <person name="di Bernardo D."/>
            <person name="Down T."/>
            <person name="Engstrom P."/>
            <person name="Fagiolini M."/>
            <person name="Faulkner G."/>
            <person name="Fletcher C.F."/>
            <person name="Fukushima T."/>
            <person name="Furuno M."/>
            <person name="Futaki S."/>
            <person name="Gariboldi M."/>
            <person name="Georgii-Hemming P."/>
            <person name="Gingeras T.R."/>
            <person name="Gojobori T."/>
            <person name="Green R.E."/>
            <person name="Gustincich S."/>
            <person name="Harbers M."/>
            <person name="Hayashi Y."/>
            <person name="Hensch T.K."/>
            <person name="Hirokawa N."/>
            <person name="Hill D."/>
            <person name="Huminiecki L."/>
            <person name="Iacono M."/>
            <person name="Ikeo K."/>
            <person name="Iwama A."/>
            <person name="Ishikawa T."/>
            <person name="Jakt M."/>
            <person name="Kanapin A."/>
            <person name="Katoh M."/>
            <person name="Kawasawa Y."/>
            <person name="Kelso J."/>
            <person name="Kitamura H."/>
            <person name="Kitano H."/>
            <person name="Kollias G."/>
            <person name="Krishnan S.P."/>
            <person name="Kruger A."/>
            <person name="Kummerfeld S.K."/>
            <person name="Kurochkin I.V."/>
            <person name="Lareau L.F."/>
            <person name="Lazarevic D."/>
            <person name="Lipovich L."/>
            <person name="Liu J."/>
            <person name="Liuni S."/>
            <person name="McWilliam S."/>
            <person name="Madan Babu M."/>
            <person name="Madera M."/>
            <person name="Marchionni L."/>
            <person name="Matsuda H."/>
            <person name="Matsuzawa S."/>
            <person name="Miki H."/>
            <person name="Mignone F."/>
            <person name="Miyake S."/>
            <person name="Morris K."/>
            <person name="Mottagui-Tabar S."/>
            <person name="Mulder N."/>
            <person name="Nakano N."/>
            <person name="Nakauchi H."/>
            <person name="Ng P."/>
            <person name="Nilsson R."/>
            <person name="Nishiguchi S."/>
            <person name="Nishikawa S."/>
            <person name="Nori F."/>
            <person name="Ohara O."/>
            <person name="Okazaki Y."/>
            <person name="Orlando V."/>
            <person name="Pang K.C."/>
            <person name="Pavan W.J."/>
            <person name="Pavesi G."/>
            <person name="Pesole G."/>
            <person name="Petrovsky N."/>
            <person name="Piazza S."/>
            <person name="Reed J."/>
            <person name="Reid J.F."/>
            <person name="Ring B.Z."/>
            <person name="Ringwald M."/>
            <person name="Rost B."/>
            <person name="Ruan Y."/>
            <person name="Salzberg S.L."/>
            <person name="Sandelin A."/>
            <person name="Schneider C."/>
            <person name="Schoenbach C."/>
            <person name="Sekiguchi K."/>
            <person name="Semple C.A."/>
            <person name="Seno S."/>
            <person name="Sessa L."/>
            <person name="Sheng Y."/>
            <person name="Shibata Y."/>
            <person name="Shimada H."/>
            <person name="Shimada K."/>
            <person name="Silva D."/>
            <person name="Sinclair B."/>
            <person name="Sperling S."/>
            <person name="Stupka E."/>
            <person name="Sugiura K."/>
            <person name="Sultana R."/>
            <person name="Takenaka Y."/>
            <person name="Taki K."/>
            <person name="Tammoja K."/>
            <person name="Tan S.L."/>
            <person name="Tang S."/>
            <person name="Taylor M.S."/>
            <person name="Tegner J."/>
            <person name="Teichmann S.A."/>
            <person name="Ueda H.R."/>
            <person name="van Nimwegen E."/>
            <person name="Verardo R."/>
            <person name="Wei C.L."/>
            <person name="Yagi K."/>
            <person name="Yamanishi H."/>
            <person name="Zabarovsky E."/>
            <person name="Zhu S."/>
            <person name="Zimmer A."/>
            <person name="Hide W."/>
            <person name="Bult C."/>
            <person name="Grimmond S.M."/>
            <person name="Teasdale R.D."/>
            <person name="Liu E.T."/>
            <person name="Brusic V."/>
            <person name="Quackenbush J."/>
            <person name="Wahlestedt C."/>
            <person name="Mattick J.S."/>
            <person name="Hume D.A."/>
            <person name="Kai C."/>
            <person name="Sasaki D."/>
            <person name="Tomaru Y."/>
            <person name="Fukuda S."/>
            <person name="Kanamori-Katayama M."/>
            <person name="Suzuki M."/>
            <person name="Aoki J."/>
            <person name="Arakawa T."/>
            <person name="Iida J."/>
            <person name="Imamura K."/>
            <person name="Itoh M."/>
            <person name="Kato T."/>
            <person name="Kawaji H."/>
            <person name="Kawagashira N."/>
            <person name="Kawashima T."/>
            <person name="Kojima M."/>
            <person name="Kondo S."/>
            <person name="Konno H."/>
            <person name="Nakano K."/>
            <person name="Ninomiya N."/>
            <person name="Nishio T."/>
            <person name="Okada M."/>
            <person name="Plessy C."/>
            <person name="Shibata K."/>
            <person name="Shiraki T."/>
            <person name="Suzuki S."/>
            <person name="Tagami M."/>
            <person name="Waki K."/>
            <person name="Watahiki A."/>
            <person name="Okamura-Oho Y."/>
            <person name="Suzuki H."/>
            <person name="Kawai J."/>
            <person name="Hayashizaki Y."/>
        </authorList>
    </citation>
    <scope>NUCLEOTIDE SEQUENCE [LARGE SCALE MRNA]</scope>
    <source>
        <strain>C57BL/6J</strain>
    </source>
</reference>
<reference key="2">
    <citation type="journal article" date="2004" name="Genome Res.">
        <title>The status, quality, and expansion of the NIH full-length cDNA project: the Mammalian Gene Collection (MGC).</title>
        <authorList>
            <consortium name="The MGC Project Team"/>
        </authorList>
    </citation>
    <scope>NUCLEOTIDE SEQUENCE [LARGE SCALE MRNA]</scope>
    <source>
        <strain>FVB/N</strain>
        <tissue>Mammary tumor</tissue>
    </source>
</reference>
<reference key="3">
    <citation type="journal article" date="2007" name="Proc. Natl. Acad. Sci. U.S.A.">
        <title>Large-scale phosphorylation analysis of mouse liver.</title>
        <authorList>
            <person name="Villen J."/>
            <person name="Beausoleil S.A."/>
            <person name="Gerber S.A."/>
            <person name="Gygi S.P."/>
        </authorList>
    </citation>
    <scope>PHOSPHORYLATION [LARGE SCALE ANALYSIS] AT SER-109 AND SER-114</scope>
    <scope>IDENTIFICATION BY MASS SPECTROMETRY [LARGE SCALE ANALYSIS]</scope>
    <source>
        <tissue>Liver</tissue>
    </source>
</reference>
<reference key="4">
    <citation type="journal article" date="2009" name="Immunity">
        <title>The phagosomal proteome in interferon-gamma-activated macrophages.</title>
        <authorList>
            <person name="Trost M."/>
            <person name="English L."/>
            <person name="Lemieux S."/>
            <person name="Courcelles M."/>
            <person name="Desjardins M."/>
            <person name="Thibault P."/>
        </authorList>
    </citation>
    <scope>PHOSPHORYLATION [LARGE SCALE ANALYSIS] AT SER-114</scope>
    <scope>IDENTIFICATION BY MASS SPECTROMETRY [LARGE SCALE ANALYSIS]</scope>
</reference>
<reference key="5">
    <citation type="journal article" date="2010" name="Cell">
        <title>A tissue-specific atlas of mouse protein phosphorylation and expression.</title>
        <authorList>
            <person name="Huttlin E.L."/>
            <person name="Jedrychowski M.P."/>
            <person name="Elias J.E."/>
            <person name="Goswami T."/>
            <person name="Rad R."/>
            <person name="Beausoleil S.A."/>
            <person name="Villen J."/>
            <person name="Haas W."/>
            <person name="Sowa M.E."/>
            <person name="Gygi S.P."/>
        </authorList>
    </citation>
    <scope>PHOSPHORYLATION [LARGE SCALE ANALYSIS] AT SER-109 AND SER-114</scope>
    <scope>IDENTIFICATION BY MASS SPECTROMETRY [LARGE SCALE ANALYSIS]</scope>
    <source>
        <tissue>Brain</tissue>
        <tissue>Brown adipose tissue</tissue>
        <tissue>Heart</tissue>
        <tissue>Kidney</tissue>
        <tissue>Liver</tissue>
        <tissue>Lung</tissue>
        <tissue>Pancreas</tissue>
        <tissue>Spleen</tissue>
    </source>
</reference>
<organism>
    <name type="scientific">Mus musculus</name>
    <name type="common">Mouse</name>
    <dbReference type="NCBI Taxonomy" id="10090"/>
    <lineage>
        <taxon>Eukaryota</taxon>
        <taxon>Metazoa</taxon>
        <taxon>Chordata</taxon>
        <taxon>Craniata</taxon>
        <taxon>Vertebrata</taxon>
        <taxon>Euteleostomi</taxon>
        <taxon>Mammalia</taxon>
        <taxon>Eutheria</taxon>
        <taxon>Euarchontoglires</taxon>
        <taxon>Glires</taxon>
        <taxon>Rodentia</taxon>
        <taxon>Myomorpha</taxon>
        <taxon>Muroidea</taxon>
        <taxon>Muridae</taxon>
        <taxon>Murinae</taxon>
        <taxon>Mus</taxon>
        <taxon>Mus</taxon>
    </lineage>
</organism>
<name>TMM51_MOUSE</name>